<proteinExistence type="inferred from homology"/>
<gene>
    <name evidence="1" type="primary">miaB</name>
    <name type="ordered locus">Shewana3_1008</name>
</gene>
<dbReference type="EC" id="2.8.4.3" evidence="1"/>
<dbReference type="EMBL" id="CP000469">
    <property type="protein sequence ID" value="ABK47243.1"/>
    <property type="molecule type" value="Genomic_DNA"/>
</dbReference>
<dbReference type="RefSeq" id="WP_011716125.1">
    <property type="nucleotide sequence ID" value="NC_008577.1"/>
</dbReference>
<dbReference type="SMR" id="A0KTX4"/>
<dbReference type="STRING" id="94122.Shewana3_1008"/>
<dbReference type="KEGG" id="shn:Shewana3_1008"/>
<dbReference type="eggNOG" id="COG0621">
    <property type="taxonomic scope" value="Bacteria"/>
</dbReference>
<dbReference type="HOGENOM" id="CLU_018697_2_0_6"/>
<dbReference type="OrthoDB" id="9805215at2"/>
<dbReference type="Proteomes" id="UP000002589">
    <property type="component" value="Chromosome"/>
</dbReference>
<dbReference type="GO" id="GO:0005829">
    <property type="term" value="C:cytosol"/>
    <property type="evidence" value="ECO:0007669"/>
    <property type="project" value="TreeGrafter"/>
</dbReference>
<dbReference type="GO" id="GO:0051539">
    <property type="term" value="F:4 iron, 4 sulfur cluster binding"/>
    <property type="evidence" value="ECO:0007669"/>
    <property type="project" value="UniProtKB-UniRule"/>
</dbReference>
<dbReference type="GO" id="GO:0046872">
    <property type="term" value="F:metal ion binding"/>
    <property type="evidence" value="ECO:0007669"/>
    <property type="project" value="UniProtKB-KW"/>
</dbReference>
<dbReference type="GO" id="GO:0035597">
    <property type="term" value="F:N6-isopentenyladenosine methylthiotransferase activity"/>
    <property type="evidence" value="ECO:0007669"/>
    <property type="project" value="TreeGrafter"/>
</dbReference>
<dbReference type="CDD" id="cd01335">
    <property type="entry name" value="Radical_SAM"/>
    <property type="match status" value="1"/>
</dbReference>
<dbReference type="FunFam" id="3.40.50.12160:FF:000001">
    <property type="entry name" value="tRNA-2-methylthio-N(6)-dimethylallyladenosine synthase"/>
    <property type="match status" value="1"/>
</dbReference>
<dbReference type="FunFam" id="3.80.30.20:FF:000001">
    <property type="entry name" value="tRNA-2-methylthio-N(6)-dimethylallyladenosine synthase 2"/>
    <property type="match status" value="1"/>
</dbReference>
<dbReference type="Gene3D" id="3.40.50.12160">
    <property type="entry name" value="Methylthiotransferase, N-terminal domain"/>
    <property type="match status" value="1"/>
</dbReference>
<dbReference type="Gene3D" id="3.80.30.20">
    <property type="entry name" value="tm_1862 like domain"/>
    <property type="match status" value="1"/>
</dbReference>
<dbReference type="HAMAP" id="MF_01864">
    <property type="entry name" value="tRNA_metthiotr_MiaB"/>
    <property type="match status" value="1"/>
</dbReference>
<dbReference type="InterPro" id="IPR006638">
    <property type="entry name" value="Elp3/MiaA/NifB-like_rSAM"/>
</dbReference>
<dbReference type="InterPro" id="IPR005839">
    <property type="entry name" value="Methylthiotransferase"/>
</dbReference>
<dbReference type="InterPro" id="IPR020612">
    <property type="entry name" value="Methylthiotransferase_CS"/>
</dbReference>
<dbReference type="InterPro" id="IPR013848">
    <property type="entry name" value="Methylthiotransferase_N"/>
</dbReference>
<dbReference type="InterPro" id="IPR038135">
    <property type="entry name" value="Methylthiotransferase_N_sf"/>
</dbReference>
<dbReference type="InterPro" id="IPR006463">
    <property type="entry name" value="MiaB_methiolase"/>
</dbReference>
<dbReference type="InterPro" id="IPR007197">
    <property type="entry name" value="rSAM"/>
</dbReference>
<dbReference type="InterPro" id="IPR023404">
    <property type="entry name" value="rSAM_horseshoe"/>
</dbReference>
<dbReference type="InterPro" id="IPR002792">
    <property type="entry name" value="TRAM_dom"/>
</dbReference>
<dbReference type="NCBIfam" id="TIGR01574">
    <property type="entry name" value="miaB-methiolase"/>
    <property type="match status" value="1"/>
</dbReference>
<dbReference type="NCBIfam" id="TIGR00089">
    <property type="entry name" value="MiaB/RimO family radical SAM methylthiotransferase"/>
    <property type="match status" value="1"/>
</dbReference>
<dbReference type="PANTHER" id="PTHR43020">
    <property type="entry name" value="CDK5 REGULATORY SUBUNIT-ASSOCIATED PROTEIN 1"/>
    <property type="match status" value="1"/>
</dbReference>
<dbReference type="PANTHER" id="PTHR43020:SF2">
    <property type="entry name" value="MITOCHONDRIAL TRNA METHYLTHIOTRANSFERASE CDK5RAP1"/>
    <property type="match status" value="1"/>
</dbReference>
<dbReference type="Pfam" id="PF04055">
    <property type="entry name" value="Radical_SAM"/>
    <property type="match status" value="1"/>
</dbReference>
<dbReference type="Pfam" id="PF01938">
    <property type="entry name" value="TRAM"/>
    <property type="match status" value="1"/>
</dbReference>
<dbReference type="Pfam" id="PF00919">
    <property type="entry name" value="UPF0004"/>
    <property type="match status" value="1"/>
</dbReference>
<dbReference type="SFLD" id="SFLDF00273">
    <property type="entry name" value="(dimethylallyl)adenosine_tRNA"/>
    <property type="match status" value="1"/>
</dbReference>
<dbReference type="SFLD" id="SFLDG01082">
    <property type="entry name" value="B12-binding_domain_containing"/>
    <property type="match status" value="1"/>
</dbReference>
<dbReference type="SFLD" id="SFLDS00029">
    <property type="entry name" value="Radical_SAM"/>
    <property type="match status" value="1"/>
</dbReference>
<dbReference type="SMART" id="SM00729">
    <property type="entry name" value="Elp3"/>
    <property type="match status" value="1"/>
</dbReference>
<dbReference type="SUPFAM" id="SSF102114">
    <property type="entry name" value="Radical SAM enzymes"/>
    <property type="match status" value="1"/>
</dbReference>
<dbReference type="PROSITE" id="PS51449">
    <property type="entry name" value="MTTASE_N"/>
    <property type="match status" value="1"/>
</dbReference>
<dbReference type="PROSITE" id="PS01278">
    <property type="entry name" value="MTTASE_RADICAL"/>
    <property type="match status" value="1"/>
</dbReference>
<dbReference type="PROSITE" id="PS51918">
    <property type="entry name" value="RADICAL_SAM"/>
    <property type="match status" value="1"/>
</dbReference>
<dbReference type="PROSITE" id="PS50926">
    <property type="entry name" value="TRAM"/>
    <property type="match status" value="1"/>
</dbReference>
<sequence>MSKKLHIKTWGCQMNEYDSSKMADLLGEYQGYTLTEEAEEADILLLNTCSIREKAQEKVFHQLGRWKTLKDKNPDLIIGVGGCVASQEGKAIKDRAQCVDIIFGPQTLHRLPDMIDQVRRGEKAVIDVSFPEIEKFDRLPEPRAEGPTAFVSIMEGCSKYCSFCVVPYTRGEEVSRPSDDIILEIAQLAEQGVREVNLLGQNVNAYRGATHDGGICTFAELLRYVAAIDGIDRIRFTTSHPIEFTQDIIDVYEDTPELVSFLHLPVQSGSDRILTAMKRGHMAIEYKSIIRRLRKARPDIQISSDFIIGFPGETKEDFADTMKLIEDVAFDHSFSFIYSARPGTPAADLPDDVDMEEKKQRLAILQDRITQQAMRYSRHMMGTVQRILVEGPSVKNPMELRGRTENNRVVNFEGQPKHIGSFVDVEIVDVYTNSLRGKFIRGEDEMDLRRNLRPSDILAKHKQDDDLGVTQFKP</sequence>
<reference key="1">
    <citation type="submission" date="2006-09" db="EMBL/GenBank/DDBJ databases">
        <title>Complete sequence of chromosome 1 of Shewanella sp. ANA-3.</title>
        <authorList>
            <person name="Copeland A."/>
            <person name="Lucas S."/>
            <person name="Lapidus A."/>
            <person name="Barry K."/>
            <person name="Detter J.C."/>
            <person name="Glavina del Rio T."/>
            <person name="Hammon N."/>
            <person name="Israni S."/>
            <person name="Dalin E."/>
            <person name="Tice H."/>
            <person name="Pitluck S."/>
            <person name="Chertkov O."/>
            <person name="Brettin T."/>
            <person name="Bruce D."/>
            <person name="Han C."/>
            <person name="Tapia R."/>
            <person name="Gilna P."/>
            <person name="Schmutz J."/>
            <person name="Larimer F."/>
            <person name="Land M."/>
            <person name="Hauser L."/>
            <person name="Kyrpides N."/>
            <person name="Kim E."/>
            <person name="Newman D."/>
            <person name="Salticov C."/>
            <person name="Konstantinidis K."/>
            <person name="Klappenback J."/>
            <person name="Tiedje J."/>
            <person name="Richardson P."/>
        </authorList>
    </citation>
    <scope>NUCLEOTIDE SEQUENCE [LARGE SCALE GENOMIC DNA]</scope>
    <source>
        <strain>ANA-3</strain>
    </source>
</reference>
<protein>
    <recommendedName>
        <fullName evidence="1">tRNA-2-methylthio-N(6)-dimethylallyladenosine synthase</fullName>
        <ecNumber evidence="1">2.8.4.3</ecNumber>
    </recommendedName>
    <alternativeName>
        <fullName evidence="1">(Dimethylallyl)adenosine tRNA methylthiotransferase MiaB</fullName>
    </alternativeName>
    <alternativeName>
        <fullName evidence="1">tRNA-i(6)A37 methylthiotransferase</fullName>
    </alternativeName>
</protein>
<evidence type="ECO:0000255" key="1">
    <source>
        <dbReference type="HAMAP-Rule" id="MF_01864"/>
    </source>
</evidence>
<evidence type="ECO:0000255" key="2">
    <source>
        <dbReference type="PROSITE-ProRule" id="PRU01266"/>
    </source>
</evidence>
<organism>
    <name type="scientific">Shewanella sp. (strain ANA-3)</name>
    <dbReference type="NCBI Taxonomy" id="94122"/>
    <lineage>
        <taxon>Bacteria</taxon>
        <taxon>Pseudomonadati</taxon>
        <taxon>Pseudomonadota</taxon>
        <taxon>Gammaproteobacteria</taxon>
        <taxon>Alteromonadales</taxon>
        <taxon>Shewanellaceae</taxon>
        <taxon>Shewanella</taxon>
    </lineage>
</organism>
<feature type="chain" id="PRO_0000374545" description="tRNA-2-methylthio-N(6)-dimethylallyladenosine synthase">
    <location>
        <begin position="1"/>
        <end position="474"/>
    </location>
</feature>
<feature type="domain" description="MTTase N-terminal" evidence="1">
    <location>
        <begin position="3"/>
        <end position="120"/>
    </location>
</feature>
<feature type="domain" description="Radical SAM core" evidence="2">
    <location>
        <begin position="143"/>
        <end position="375"/>
    </location>
</feature>
<feature type="domain" description="TRAM" evidence="1">
    <location>
        <begin position="378"/>
        <end position="441"/>
    </location>
</feature>
<feature type="binding site" evidence="1">
    <location>
        <position position="12"/>
    </location>
    <ligand>
        <name>[4Fe-4S] cluster</name>
        <dbReference type="ChEBI" id="CHEBI:49883"/>
        <label>1</label>
    </ligand>
</feature>
<feature type="binding site" evidence="1">
    <location>
        <position position="49"/>
    </location>
    <ligand>
        <name>[4Fe-4S] cluster</name>
        <dbReference type="ChEBI" id="CHEBI:49883"/>
        <label>1</label>
    </ligand>
</feature>
<feature type="binding site" evidence="1">
    <location>
        <position position="83"/>
    </location>
    <ligand>
        <name>[4Fe-4S] cluster</name>
        <dbReference type="ChEBI" id="CHEBI:49883"/>
        <label>1</label>
    </ligand>
</feature>
<feature type="binding site" evidence="1">
    <location>
        <position position="157"/>
    </location>
    <ligand>
        <name>[4Fe-4S] cluster</name>
        <dbReference type="ChEBI" id="CHEBI:49883"/>
        <label>2</label>
        <note>4Fe-4S-S-AdoMet</note>
    </ligand>
</feature>
<feature type="binding site" evidence="1">
    <location>
        <position position="161"/>
    </location>
    <ligand>
        <name>[4Fe-4S] cluster</name>
        <dbReference type="ChEBI" id="CHEBI:49883"/>
        <label>2</label>
        <note>4Fe-4S-S-AdoMet</note>
    </ligand>
</feature>
<feature type="binding site" evidence="1">
    <location>
        <position position="164"/>
    </location>
    <ligand>
        <name>[4Fe-4S] cluster</name>
        <dbReference type="ChEBI" id="CHEBI:49883"/>
        <label>2</label>
        <note>4Fe-4S-S-AdoMet</note>
    </ligand>
</feature>
<name>MIAB_SHESA</name>
<keyword id="KW-0004">4Fe-4S</keyword>
<keyword id="KW-0963">Cytoplasm</keyword>
<keyword id="KW-0408">Iron</keyword>
<keyword id="KW-0411">Iron-sulfur</keyword>
<keyword id="KW-0479">Metal-binding</keyword>
<keyword id="KW-0949">S-adenosyl-L-methionine</keyword>
<keyword id="KW-0808">Transferase</keyword>
<keyword id="KW-0819">tRNA processing</keyword>
<accession>A0KTX4</accession>
<comment type="function">
    <text evidence="1">Catalyzes the methylthiolation of N6-(dimethylallyl)adenosine (i(6)A), leading to the formation of 2-methylthio-N6-(dimethylallyl)adenosine (ms(2)i(6)A) at position 37 in tRNAs that read codons beginning with uridine.</text>
</comment>
<comment type="catalytic activity">
    <reaction evidence="1">
        <text>N(6)-dimethylallyladenosine(37) in tRNA + (sulfur carrier)-SH + AH2 + 2 S-adenosyl-L-methionine = 2-methylsulfanyl-N(6)-dimethylallyladenosine(37) in tRNA + (sulfur carrier)-H + 5'-deoxyadenosine + L-methionine + A + S-adenosyl-L-homocysteine + 2 H(+)</text>
        <dbReference type="Rhea" id="RHEA:37067"/>
        <dbReference type="Rhea" id="RHEA-COMP:10375"/>
        <dbReference type="Rhea" id="RHEA-COMP:10376"/>
        <dbReference type="Rhea" id="RHEA-COMP:14737"/>
        <dbReference type="Rhea" id="RHEA-COMP:14739"/>
        <dbReference type="ChEBI" id="CHEBI:13193"/>
        <dbReference type="ChEBI" id="CHEBI:15378"/>
        <dbReference type="ChEBI" id="CHEBI:17319"/>
        <dbReference type="ChEBI" id="CHEBI:17499"/>
        <dbReference type="ChEBI" id="CHEBI:29917"/>
        <dbReference type="ChEBI" id="CHEBI:57844"/>
        <dbReference type="ChEBI" id="CHEBI:57856"/>
        <dbReference type="ChEBI" id="CHEBI:59789"/>
        <dbReference type="ChEBI" id="CHEBI:64428"/>
        <dbReference type="ChEBI" id="CHEBI:74415"/>
        <dbReference type="ChEBI" id="CHEBI:74417"/>
        <dbReference type="EC" id="2.8.4.3"/>
    </reaction>
</comment>
<comment type="cofactor">
    <cofactor evidence="1">
        <name>[4Fe-4S] cluster</name>
        <dbReference type="ChEBI" id="CHEBI:49883"/>
    </cofactor>
    <text evidence="1">Binds 2 [4Fe-4S] clusters. One cluster is coordinated with 3 cysteines and an exchangeable S-adenosyl-L-methionine.</text>
</comment>
<comment type="subunit">
    <text evidence="1">Monomer.</text>
</comment>
<comment type="subcellular location">
    <subcellularLocation>
        <location evidence="1">Cytoplasm</location>
    </subcellularLocation>
</comment>
<comment type="similarity">
    <text evidence="1">Belongs to the methylthiotransferase family. MiaB subfamily.</text>
</comment>